<accession>Q8A128</accession>
<proteinExistence type="inferred from homology"/>
<sequence length="414" mass="46080">MADSKTKKKCSFCGRSENEVGFLITGMNGYICDSCATQAYEITQEALGEGRKRAGATKLNLKELPKPVEIKKFLDQYVIGQDDAKRFLSVSVYNHYKRLLQKDSGDDVEIEKSNIIMVGSTGTGKTLLARTIAKLLHVPFTIVDATVLTEAGYVGEDIESILTRLLQVADYNVPEAEQGIVFIDEIDKIARKGDNPSITRDVSGEGVQQGLLKLLEGSVVNVPPQGGRKHPDQKMIPVNTKNILFICGGAFDGIEKKIAQRLNTHVVGYTASQKTAVIDKNNMMQYIAPQDLKSFGLIPEIIGRLPVLTYLNPLDRNALRAILTEPKNSIIKQYIKLFEMDGIKLTFEDSVFEYIVDKAVEYKLGARGLRSIVETIMMDVMFEIPSESKKEYKVTLDYAKQQLEKANMARLQIA</sequence>
<keyword id="KW-0067">ATP-binding</keyword>
<keyword id="KW-0143">Chaperone</keyword>
<keyword id="KW-0479">Metal-binding</keyword>
<keyword id="KW-0547">Nucleotide-binding</keyword>
<keyword id="KW-1185">Reference proteome</keyword>
<keyword id="KW-0862">Zinc</keyword>
<evidence type="ECO:0000255" key="1">
    <source>
        <dbReference type="HAMAP-Rule" id="MF_00175"/>
    </source>
</evidence>
<evidence type="ECO:0000255" key="2">
    <source>
        <dbReference type="PROSITE-ProRule" id="PRU01250"/>
    </source>
</evidence>
<gene>
    <name evidence="1" type="primary">clpX</name>
    <name type="ordered locus">BT_3843</name>
</gene>
<organism>
    <name type="scientific">Bacteroides thetaiotaomicron (strain ATCC 29148 / DSM 2079 / JCM 5827 / CCUG 10774 / NCTC 10582 / VPI-5482 / E50)</name>
    <dbReference type="NCBI Taxonomy" id="226186"/>
    <lineage>
        <taxon>Bacteria</taxon>
        <taxon>Pseudomonadati</taxon>
        <taxon>Bacteroidota</taxon>
        <taxon>Bacteroidia</taxon>
        <taxon>Bacteroidales</taxon>
        <taxon>Bacteroidaceae</taxon>
        <taxon>Bacteroides</taxon>
    </lineage>
</organism>
<reference key="1">
    <citation type="journal article" date="2003" name="Science">
        <title>A genomic view of the human-Bacteroides thetaiotaomicron symbiosis.</title>
        <authorList>
            <person name="Xu J."/>
            <person name="Bjursell M.K."/>
            <person name="Himrod J."/>
            <person name="Deng S."/>
            <person name="Carmichael L.K."/>
            <person name="Chiang H.C."/>
            <person name="Hooper L.V."/>
            <person name="Gordon J.I."/>
        </authorList>
    </citation>
    <scope>NUCLEOTIDE SEQUENCE [LARGE SCALE GENOMIC DNA]</scope>
    <source>
        <strain>ATCC 29148 / DSM 2079 / JCM 5827 / CCUG 10774 / NCTC 10582 / VPI-5482 / E50</strain>
    </source>
</reference>
<name>CLPX_BACTN</name>
<dbReference type="EMBL" id="AE015928">
    <property type="protein sequence ID" value="AAO78948.1"/>
    <property type="molecule type" value="Genomic_DNA"/>
</dbReference>
<dbReference type="RefSeq" id="NP_812754.1">
    <property type="nucleotide sequence ID" value="NC_004663.1"/>
</dbReference>
<dbReference type="RefSeq" id="WP_008764111.1">
    <property type="nucleotide sequence ID" value="NC_004663.1"/>
</dbReference>
<dbReference type="SMR" id="Q8A128"/>
<dbReference type="FunCoup" id="Q8A128">
    <property type="interactions" value="410"/>
</dbReference>
<dbReference type="STRING" id="226186.BT_3843"/>
<dbReference type="PaxDb" id="226186-BT_3843"/>
<dbReference type="EnsemblBacteria" id="AAO78948">
    <property type="protein sequence ID" value="AAO78948"/>
    <property type="gene ID" value="BT_3843"/>
</dbReference>
<dbReference type="GeneID" id="60925018"/>
<dbReference type="KEGG" id="bth:BT_3843"/>
<dbReference type="PATRIC" id="fig|226186.12.peg.3907"/>
<dbReference type="eggNOG" id="COG1219">
    <property type="taxonomic scope" value="Bacteria"/>
</dbReference>
<dbReference type="HOGENOM" id="CLU_014218_8_2_10"/>
<dbReference type="InParanoid" id="Q8A128"/>
<dbReference type="OrthoDB" id="9804062at2"/>
<dbReference type="Proteomes" id="UP000001414">
    <property type="component" value="Chromosome"/>
</dbReference>
<dbReference type="GO" id="GO:0009376">
    <property type="term" value="C:HslUV protease complex"/>
    <property type="evidence" value="ECO:0000318"/>
    <property type="project" value="GO_Central"/>
</dbReference>
<dbReference type="GO" id="GO:0005524">
    <property type="term" value="F:ATP binding"/>
    <property type="evidence" value="ECO:0000318"/>
    <property type="project" value="GO_Central"/>
</dbReference>
<dbReference type="GO" id="GO:0016887">
    <property type="term" value="F:ATP hydrolysis activity"/>
    <property type="evidence" value="ECO:0000318"/>
    <property type="project" value="GO_Central"/>
</dbReference>
<dbReference type="GO" id="GO:0140662">
    <property type="term" value="F:ATP-dependent protein folding chaperone"/>
    <property type="evidence" value="ECO:0007669"/>
    <property type="project" value="InterPro"/>
</dbReference>
<dbReference type="GO" id="GO:0046983">
    <property type="term" value="F:protein dimerization activity"/>
    <property type="evidence" value="ECO:0007669"/>
    <property type="project" value="InterPro"/>
</dbReference>
<dbReference type="GO" id="GO:0051082">
    <property type="term" value="F:unfolded protein binding"/>
    <property type="evidence" value="ECO:0007669"/>
    <property type="project" value="UniProtKB-UniRule"/>
</dbReference>
<dbReference type="GO" id="GO:0008270">
    <property type="term" value="F:zinc ion binding"/>
    <property type="evidence" value="ECO:0007669"/>
    <property type="project" value="InterPro"/>
</dbReference>
<dbReference type="GO" id="GO:0051301">
    <property type="term" value="P:cell division"/>
    <property type="evidence" value="ECO:0000318"/>
    <property type="project" value="GO_Central"/>
</dbReference>
<dbReference type="GO" id="GO:0051603">
    <property type="term" value="P:proteolysis involved in protein catabolic process"/>
    <property type="evidence" value="ECO:0000318"/>
    <property type="project" value="GO_Central"/>
</dbReference>
<dbReference type="CDD" id="cd19497">
    <property type="entry name" value="RecA-like_ClpX"/>
    <property type="match status" value="1"/>
</dbReference>
<dbReference type="FunFam" id="1.10.8.60:FF:000002">
    <property type="entry name" value="ATP-dependent Clp protease ATP-binding subunit ClpX"/>
    <property type="match status" value="1"/>
</dbReference>
<dbReference type="FunFam" id="3.40.50.300:FF:000005">
    <property type="entry name" value="ATP-dependent Clp protease ATP-binding subunit ClpX"/>
    <property type="match status" value="1"/>
</dbReference>
<dbReference type="Gene3D" id="1.10.8.60">
    <property type="match status" value="1"/>
</dbReference>
<dbReference type="Gene3D" id="6.20.220.10">
    <property type="entry name" value="ClpX chaperone, C4-type zinc finger domain"/>
    <property type="match status" value="1"/>
</dbReference>
<dbReference type="Gene3D" id="3.40.50.300">
    <property type="entry name" value="P-loop containing nucleotide triphosphate hydrolases"/>
    <property type="match status" value="1"/>
</dbReference>
<dbReference type="HAMAP" id="MF_00175">
    <property type="entry name" value="ClpX"/>
    <property type="match status" value="1"/>
</dbReference>
<dbReference type="InterPro" id="IPR003593">
    <property type="entry name" value="AAA+_ATPase"/>
</dbReference>
<dbReference type="InterPro" id="IPR050052">
    <property type="entry name" value="ATP-dep_Clp_protease_ClpX"/>
</dbReference>
<dbReference type="InterPro" id="IPR003959">
    <property type="entry name" value="ATPase_AAA_core"/>
</dbReference>
<dbReference type="InterPro" id="IPR019489">
    <property type="entry name" value="Clp_ATPase_C"/>
</dbReference>
<dbReference type="InterPro" id="IPR004487">
    <property type="entry name" value="Clp_protease_ATP-bd_su_ClpX"/>
</dbReference>
<dbReference type="InterPro" id="IPR046425">
    <property type="entry name" value="ClpX_bact"/>
</dbReference>
<dbReference type="InterPro" id="IPR027417">
    <property type="entry name" value="P-loop_NTPase"/>
</dbReference>
<dbReference type="InterPro" id="IPR010603">
    <property type="entry name" value="Znf_CppX_C4"/>
</dbReference>
<dbReference type="InterPro" id="IPR038366">
    <property type="entry name" value="Znf_CppX_C4_sf"/>
</dbReference>
<dbReference type="NCBIfam" id="TIGR00382">
    <property type="entry name" value="clpX"/>
    <property type="match status" value="1"/>
</dbReference>
<dbReference type="NCBIfam" id="NF003745">
    <property type="entry name" value="PRK05342.1"/>
    <property type="match status" value="1"/>
</dbReference>
<dbReference type="PANTHER" id="PTHR48102:SF7">
    <property type="entry name" value="ATP-DEPENDENT CLP PROTEASE ATP-BINDING SUBUNIT CLPX-LIKE, MITOCHONDRIAL"/>
    <property type="match status" value="1"/>
</dbReference>
<dbReference type="PANTHER" id="PTHR48102">
    <property type="entry name" value="ATP-DEPENDENT CLP PROTEASE ATP-BINDING SUBUNIT CLPX-LIKE, MITOCHONDRIAL-RELATED"/>
    <property type="match status" value="1"/>
</dbReference>
<dbReference type="Pfam" id="PF07724">
    <property type="entry name" value="AAA_2"/>
    <property type="match status" value="1"/>
</dbReference>
<dbReference type="Pfam" id="PF10431">
    <property type="entry name" value="ClpB_D2-small"/>
    <property type="match status" value="1"/>
</dbReference>
<dbReference type="Pfam" id="PF06689">
    <property type="entry name" value="zf-C4_ClpX"/>
    <property type="match status" value="1"/>
</dbReference>
<dbReference type="SMART" id="SM00382">
    <property type="entry name" value="AAA"/>
    <property type="match status" value="1"/>
</dbReference>
<dbReference type="SMART" id="SM01086">
    <property type="entry name" value="ClpB_D2-small"/>
    <property type="match status" value="1"/>
</dbReference>
<dbReference type="SMART" id="SM00994">
    <property type="entry name" value="zf-C4_ClpX"/>
    <property type="match status" value="1"/>
</dbReference>
<dbReference type="SUPFAM" id="SSF57716">
    <property type="entry name" value="Glucocorticoid receptor-like (DNA-binding domain)"/>
    <property type="match status" value="1"/>
</dbReference>
<dbReference type="SUPFAM" id="SSF52540">
    <property type="entry name" value="P-loop containing nucleoside triphosphate hydrolases"/>
    <property type="match status" value="1"/>
</dbReference>
<dbReference type="PROSITE" id="PS51902">
    <property type="entry name" value="CLPX_ZB"/>
    <property type="match status" value="1"/>
</dbReference>
<protein>
    <recommendedName>
        <fullName evidence="1">ATP-dependent Clp protease ATP-binding subunit ClpX</fullName>
    </recommendedName>
</protein>
<comment type="function">
    <text evidence="1">ATP-dependent specificity component of the Clp protease. It directs the protease to specific substrates. Can perform chaperone functions in the absence of ClpP.</text>
</comment>
<comment type="subunit">
    <text evidence="1">Component of the ClpX-ClpP complex. Forms a hexameric ring that, in the presence of ATP, binds to fourteen ClpP subunits assembled into a disk-like structure with a central cavity, resembling the structure of eukaryotic proteasomes.</text>
</comment>
<comment type="similarity">
    <text evidence="1">Belongs to the ClpX chaperone family.</text>
</comment>
<feature type="chain" id="PRO_0000160314" description="ATP-dependent Clp protease ATP-binding subunit ClpX">
    <location>
        <begin position="1"/>
        <end position="414"/>
    </location>
</feature>
<feature type="domain" description="ClpX-type ZB" evidence="2">
    <location>
        <begin position="1"/>
        <end position="51"/>
    </location>
</feature>
<feature type="binding site" evidence="2">
    <location>
        <position position="10"/>
    </location>
    <ligand>
        <name>Zn(2+)</name>
        <dbReference type="ChEBI" id="CHEBI:29105"/>
    </ligand>
</feature>
<feature type="binding site" evidence="2">
    <location>
        <position position="13"/>
    </location>
    <ligand>
        <name>Zn(2+)</name>
        <dbReference type="ChEBI" id="CHEBI:29105"/>
    </ligand>
</feature>
<feature type="binding site" evidence="2">
    <location>
        <position position="32"/>
    </location>
    <ligand>
        <name>Zn(2+)</name>
        <dbReference type="ChEBI" id="CHEBI:29105"/>
    </ligand>
</feature>
<feature type="binding site" evidence="2">
    <location>
        <position position="35"/>
    </location>
    <ligand>
        <name>Zn(2+)</name>
        <dbReference type="ChEBI" id="CHEBI:29105"/>
    </ligand>
</feature>
<feature type="binding site" evidence="1">
    <location>
        <begin position="120"/>
        <end position="127"/>
    </location>
    <ligand>
        <name>ATP</name>
        <dbReference type="ChEBI" id="CHEBI:30616"/>
    </ligand>
</feature>